<sequence>MKAATQARIDDSPLAWLDAVQRQRHEAGLRRCLRPRPAVATELDLASNDYLGLSRHPAVIDGGVQALRIWGAGATGSRLVTGDTKLHQQFEAELAEFVGAAAGLLFSSGYTANLGAVVGLSGPGSLLVSDARSHASLVDACRLSRARVVVTPHRDVDAVDAALRSRDEQRAVVVTDSVFSADGSLAPVRELLEVCRRHGALLLVDEAHGLGVRGGGRGLLYELGLAGAPDVVMTTTLSKALGSQGGVVLGPTPVRAHLIDAARPFIFDTGLAPAAVGAARAALRVLQAEPWRPQAVLNHAGELARMCGVAAVPDSAMVSVILGEPESAVAAAAACLDAGVKVGCFRPPTVPAGTSRLRLTARASLNAGELELARRVLTDVLAVARR</sequence>
<reference key="1">
    <citation type="journal article" date="1998" name="Nature">
        <title>Deciphering the biology of Mycobacterium tuberculosis from the complete genome sequence.</title>
        <authorList>
            <person name="Cole S.T."/>
            <person name="Brosch R."/>
            <person name="Parkhill J."/>
            <person name="Garnier T."/>
            <person name="Churcher C.M."/>
            <person name="Harris D.E."/>
            <person name="Gordon S.V."/>
            <person name="Eiglmeier K."/>
            <person name="Gas S."/>
            <person name="Barry C.E. III"/>
            <person name="Tekaia F."/>
            <person name="Badcock K."/>
            <person name="Basham D."/>
            <person name="Brown D."/>
            <person name="Chillingworth T."/>
            <person name="Connor R."/>
            <person name="Davies R.M."/>
            <person name="Devlin K."/>
            <person name="Feltwell T."/>
            <person name="Gentles S."/>
            <person name="Hamlin N."/>
            <person name="Holroyd S."/>
            <person name="Hornsby T."/>
            <person name="Jagels K."/>
            <person name="Krogh A."/>
            <person name="McLean J."/>
            <person name="Moule S."/>
            <person name="Murphy L.D."/>
            <person name="Oliver S."/>
            <person name="Osborne J."/>
            <person name="Quail M.A."/>
            <person name="Rajandream M.A."/>
            <person name="Rogers J."/>
            <person name="Rutter S."/>
            <person name="Seeger K."/>
            <person name="Skelton S."/>
            <person name="Squares S."/>
            <person name="Squares R."/>
            <person name="Sulston J.E."/>
            <person name="Taylor K."/>
            <person name="Whitehead S."/>
            <person name="Barrell B.G."/>
        </authorList>
    </citation>
    <scope>NUCLEOTIDE SEQUENCE [LARGE SCALE GENOMIC DNA]</scope>
    <source>
        <strain>ATCC 25618 / H37Rv</strain>
    </source>
</reference>
<reference key="2">
    <citation type="journal article" date="2003" name="Proc. Natl. Acad. Sci. U.S.A.">
        <title>Genetic requirements for mycobacterial survival during infection.</title>
        <authorList>
            <person name="Sassetti C.M."/>
            <person name="Rubin E.J."/>
        </authorList>
    </citation>
    <scope>DISRUPTION PHENOTYPE</scope>
    <source>
        <strain>ATCC 25618 / H37Rv</strain>
    </source>
</reference>
<reference key="3">
    <citation type="journal article" date="2006" name="J. Biol. Chem.">
        <title>Broad substrate stereospecificity of the Mycobacterium tuberculosis 7-keto-8-aminopelargonic acid synthase: Spectroscopic and kinetic studies.</title>
        <authorList>
            <person name="Bhor V.M."/>
            <person name="Dev S."/>
            <person name="Vasanthakumar G.R."/>
            <person name="Kumar P."/>
            <person name="Sinha S."/>
            <person name="Surolia A."/>
        </authorList>
    </citation>
    <scope>FUNCTION AS A 8-AMINO-7-OXONONANOATE SYNTHASE</scope>
    <scope>CATALYTIC ACTIVITY</scope>
    <scope>MASS SPECTROMETRY</scope>
    <scope>BIOPHYSICOCHEMICAL PROPERTIES</scope>
    <scope>SUBSTRATE SPECIFICITY</scope>
    <scope>ACTIVITY REGULATION</scope>
    <scope>COFACTOR</scope>
</reference>
<reference key="4">
    <citation type="journal article" date="2011" name="Mol. Cell. Proteomics">
        <title>Proteogenomic analysis of Mycobacterium tuberculosis by high resolution mass spectrometry.</title>
        <authorList>
            <person name="Kelkar D.S."/>
            <person name="Kumar D."/>
            <person name="Kumar P."/>
            <person name="Balakrishnan L."/>
            <person name="Muthusamy B."/>
            <person name="Yadav A.K."/>
            <person name="Shrivastava P."/>
            <person name="Marimuthu A."/>
            <person name="Anand S."/>
            <person name="Sundaram H."/>
            <person name="Kingsbury R."/>
            <person name="Harsha H.C."/>
            <person name="Nair B."/>
            <person name="Prasad T.S."/>
            <person name="Chauhan D.S."/>
            <person name="Katoch K."/>
            <person name="Katoch V.M."/>
            <person name="Kumar P."/>
            <person name="Chaerkady R."/>
            <person name="Ramachandran S."/>
            <person name="Dash D."/>
            <person name="Pandey A."/>
        </authorList>
    </citation>
    <scope>IDENTIFICATION BY MASS SPECTROMETRY [LARGE SCALE ANALYSIS]</scope>
    <source>
        <strain>ATCC 25618 / H37Rv</strain>
    </source>
</reference>
<reference key="5">
    <citation type="journal article" date="2010" name="Biochemistry">
        <title>Structural characterization of the Mycobacterium tuberculosis biotin biosynthesis enzymes 7,8-diaminopelargonic acid synthase and dethiobiotin synthetase.</title>
        <authorList>
            <person name="Dey S."/>
            <person name="Lane J.M."/>
            <person name="Lee R.E."/>
            <person name="Rubin E.J."/>
            <person name="Sacchettini J.C."/>
        </authorList>
    </citation>
    <scope>DISRUPTION PHENOTYPE</scope>
    <source>
        <strain>ATCC 25618 / H37Rv</strain>
    </source>
</reference>
<comment type="function">
    <text evidence="1 3">Catalyzes the decarboxylative condensation of pimeloyl-[acyl-carrier protein] and L-alanine to produce 8-amino-7-oxononanoate (AON), [acyl-carrier protein], and carbon dioxide (By similarity). Can also use pimeloyl-CoA instead of pimeloyl-ACP as substrate. To a lesser extent, can also utilize D-alanine instead of L-alanine as substrate.</text>
</comment>
<comment type="catalytic activity">
    <reaction evidence="3">
        <text>6-carboxyhexanoyl-[ACP] + L-alanine + H(+) = (8S)-8-amino-7-oxononanoate + holo-[ACP] + CO2</text>
        <dbReference type="Rhea" id="RHEA:42288"/>
        <dbReference type="Rhea" id="RHEA-COMP:9685"/>
        <dbReference type="Rhea" id="RHEA-COMP:9955"/>
        <dbReference type="ChEBI" id="CHEBI:15378"/>
        <dbReference type="ChEBI" id="CHEBI:16526"/>
        <dbReference type="ChEBI" id="CHEBI:57972"/>
        <dbReference type="ChEBI" id="CHEBI:64479"/>
        <dbReference type="ChEBI" id="CHEBI:78846"/>
        <dbReference type="ChEBI" id="CHEBI:149468"/>
        <dbReference type="EC" id="2.3.1.47"/>
    </reaction>
</comment>
<comment type="cofactor">
    <cofactor evidence="3">
        <name>pyridoxal 5'-phosphate</name>
        <dbReference type="ChEBI" id="CHEBI:597326"/>
    </cofactor>
</comment>
<comment type="activity regulation">
    <text evidence="3">Inhibited by D-alanine and D-7-keto-8-amino-pelargonic acid.</text>
</comment>
<comment type="biophysicochemical properties">
    <kinetics>
        <KM evidence="3">1.5 uM for pimeloyl-CoA (at pH 7.7 and 25 degrees Celsius)</KM>
        <KM evidence="3">201.5 uM for D-alanine (at pH 7.7 and 25 degrees Celsius)</KM>
        <KM evidence="3">467.5 uM for L-alanine (at pH 7.7 and 25 degrees Celsius)</KM>
        <text>kcat is 0.007 sec(-1) and 0.0036 sec(-1) with L-alanine and D-alanine as substrate, respectively, and pimeloyl-CoA as co-substrate.</text>
    </kinetics>
</comment>
<comment type="pathway">
    <text>Cofactor biosynthesis; biotin biosynthesis.</text>
</comment>
<comment type="subunit">
    <text evidence="1">Homodimer.</text>
</comment>
<comment type="mass spectrometry"/>
<comment type="disruption phenotype">
    <text evidence="2 4">Cells lacking this gene are shown to be highly attenuated in a mouse tuberculosis model (PubMed:14569030). Essential for growth even in liquid culture; growth does not occur on biotin-containing medium after biotin deprivation (PubMed:20565114).</text>
</comment>
<comment type="similarity">
    <text evidence="5">Belongs to the class-II pyridoxal-phosphate-dependent aminotransferase family. BioF subfamily.</text>
</comment>
<gene>
    <name type="primary">bioF1</name>
    <name type="ordered locus">Rv1569</name>
    <name type="ORF">MTCY336.34c</name>
</gene>
<protein>
    <recommendedName>
        <fullName>8-amino-7-oxononanoate synthase 1</fullName>
        <shortName>AONS</shortName>
        <ecNumber>2.3.1.47</ecNumber>
    </recommendedName>
    <alternativeName>
        <fullName>7-keto-8-amino-pelargonic acid synthase</fullName>
        <shortName>7-KAP synthase</shortName>
        <shortName>KAPA synthase</shortName>
    </alternativeName>
    <alternativeName>
        <fullName>8-amino-7-ketopelargonate synthase</fullName>
    </alternativeName>
</protein>
<accession>P9WQ87</accession>
<accession>L0TA03</accession>
<accession>O06621</accession>
<accession>P0A4X4</accession>
<name>BIOF1_MYCTU</name>
<feature type="chain" id="PRO_0000163818" description="8-amino-7-oxononanoate synthase 1">
    <location>
        <begin position="1"/>
        <end position="386"/>
    </location>
</feature>
<feature type="binding site" evidence="1">
    <location>
        <position position="31"/>
    </location>
    <ligand>
        <name>substrate</name>
    </ligand>
</feature>
<feature type="binding site" evidence="1">
    <location>
        <begin position="109"/>
        <end position="110"/>
    </location>
    <ligand>
        <name>pyridoxal 5'-phosphate</name>
        <dbReference type="ChEBI" id="CHEBI:597326"/>
    </ligand>
</feature>
<feature type="binding site" evidence="1">
    <location>
        <position position="134"/>
    </location>
    <ligand>
        <name>substrate</name>
    </ligand>
</feature>
<feature type="binding site" evidence="1">
    <location>
        <position position="180"/>
    </location>
    <ligand>
        <name>pyridoxal 5'-phosphate</name>
        <dbReference type="ChEBI" id="CHEBI:597326"/>
    </ligand>
</feature>
<feature type="binding site" evidence="1">
    <location>
        <begin position="205"/>
        <end position="208"/>
    </location>
    <ligand>
        <name>pyridoxal 5'-phosphate</name>
        <dbReference type="ChEBI" id="CHEBI:597326"/>
    </ligand>
</feature>
<feature type="binding site" evidence="1">
    <location>
        <begin position="236"/>
        <end position="239"/>
    </location>
    <ligand>
        <name>pyridoxal 5'-phosphate</name>
        <dbReference type="ChEBI" id="CHEBI:597326"/>
    </ligand>
</feature>
<feature type="binding site" evidence="1">
    <location>
        <position position="349"/>
    </location>
    <ligand>
        <name>substrate</name>
    </ligand>
</feature>
<feature type="modified residue" description="N6-(pyridoxal phosphate)lysine" evidence="1">
    <location>
        <position position="239"/>
    </location>
</feature>
<proteinExistence type="evidence at protein level"/>
<organism>
    <name type="scientific">Mycobacterium tuberculosis (strain ATCC 25618 / H37Rv)</name>
    <dbReference type="NCBI Taxonomy" id="83332"/>
    <lineage>
        <taxon>Bacteria</taxon>
        <taxon>Bacillati</taxon>
        <taxon>Actinomycetota</taxon>
        <taxon>Actinomycetes</taxon>
        <taxon>Mycobacteriales</taxon>
        <taxon>Mycobacteriaceae</taxon>
        <taxon>Mycobacterium</taxon>
        <taxon>Mycobacterium tuberculosis complex</taxon>
    </lineage>
</organism>
<dbReference type="EC" id="2.3.1.47"/>
<dbReference type="EMBL" id="AL123456">
    <property type="protein sequence ID" value="CCP44333.1"/>
    <property type="molecule type" value="Genomic_DNA"/>
</dbReference>
<dbReference type="PIR" id="C70540">
    <property type="entry name" value="C70540"/>
</dbReference>
<dbReference type="RefSeq" id="WP_003407805.1">
    <property type="nucleotide sequence ID" value="NZ_NVQJ01000004.1"/>
</dbReference>
<dbReference type="RefSeq" id="YP_177822.1">
    <property type="nucleotide sequence ID" value="NC_000962.3"/>
</dbReference>
<dbReference type="SMR" id="P9WQ87"/>
<dbReference type="FunCoup" id="P9WQ87">
    <property type="interactions" value="349"/>
</dbReference>
<dbReference type="STRING" id="83332.Rv1569"/>
<dbReference type="PaxDb" id="83332-Rv1569"/>
<dbReference type="DNASU" id="886345"/>
<dbReference type="GeneID" id="886345"/>
<dbReference type="KEGG" id="mtu:Rv1569"/>
<dbReference type="KEGG" id="mtv:RVBD_1569"/>
<dbReference type="TubercuList" id="Rv1569"/>
<dbReference type="eggNOG" id="COG0156">
    <property type="taxonomic scope" value="Bacteria"/>
</dbReference>
<dbReference type="InParanoid" id="P9WQ87"/>
<dbReference type="OrthoDB" id="9807157at2"/>
<dbReference type="PhylomeDB" id="P9WQ87"/>
<dbReference type="SABIO-RK" id="P9WQ87"/>
<dbReference type="UniPathway" id="UPA00078"/>
<dbReference type="Proteomes" id="UP000001584">
    <property type="component" value="Chromosome"/>
</dbReference>
<dbReference type="GO" id="GO:0009274">
    <property type="term" value="C:peptidoglycan-based cell wall"/>
    <property type="evidence" value="ECO:0007005"/>
    <property type="project" value="MTBBASE"/>
</dbReference>
<dbReference type="GO" id="GO:0005886">
    <property type="term" value="C:plasma membrane"/>
    <property type="evidence" value="ECO:0007005"/>
    <property type="project" value="MTBBASE"/>
</dbReference>
<dbReference type="GO" id="GO:0008710">
    <property type="term" value="F:8-amino-7-oxononanoate synthase activity"/>
    <property type="evidence" value="ECO:0000314"/>
    <property type="project" value="MTBBASE"/>
</dbReference>
<dbReference type="GO" id="GO:0030170">
    <property type="term" value="F:pyridoxal phosphate binding"/>
    <property type="evidence" value="ECO:0007669"/>
    <property type="project" value="InterPro"/>
</dbReference>
<dbReference type="GO" id="GO:0009102">
    <property type="term" value="P:biotin biosynthetic process"/>
    <property type="evidence" value="ECO:0000314"/>
    <property type="project" value="MTBBASE"/>
</dbReference>
<dbReference type="FunFam" id="3.40.640.10:FF:000130">
    <property type="entry name" value="8-amino-7-oxononanoate synthase"/>
    <property type="match status" value="1"/>
</dbReference>
<dbReference type="Gene3D" id="3.90.1150.10">
    <property type="entry name" value="Aspartate Aminotransferase, domain 1"/>
    <property type="match status" value="1"/>
</dbReference>
<dbReference type="Gene3D" id="3.40.640.10">
    <property type="entry name" value="Type I PLP-dependent aspartate aminotransferase-like (Major domain)"/>
    <property type="match status" value="1"/>
</dbReference>
<dbReference type="InterPro" id="IPR001917">
    <property type="entry name" value="Aminotrans_II_pyridoxalP_BS"/>
</dbReference>
<dbReference type="InterPro" id="IPR004839">
    <property type="entry name" value="Aminotransferase_I/II_large"/>
</dbReference>
<dbReference type="InterPro" id="IPR050087">
    <property type="entry name" value="AON_synthase_class-II"/>
</dbReference>
<dbReference type="InterPro" id="IPR015424">
    <property type="entry name" value="PyrdxlP-dep_Trfase"/>
</dbReference>
<dbReference type="InterPro" id="IPR015421">
    <property type="entry name" value="PyrdxlP-dep_Trfase_major"/>
</dbReference>
<dbReference type="InterPro" id="IPR015422">
    <property type="entry name" value="PyrdxlP-dep_Trfase_small"/>
</dbReference>
<dbReference type="PANTHER" id="PTHR13693:SF100">
    <property type="entry name" value="8-AMINO-7-OXONONANOATE SYNTHASE"/>
    <property type="match status" value="1"/>
</dbReference>
<dbReference type="PANTHER" id="PTHR13693">
    <property type="entry name" value="CLASS II AMINOTRANSFERASE/8-AMINO-7-OXONONANOATE SYNTHASE"/>
    <property type="match status" value="1"/>
</dbReference>
<dbReference type="Pfam" id="PF00155">
    <property type="entry name" value="Aminotran_1_2"/>
    <property type="match status" value="1"/>
</dbReference>
<dbReference type="SUPFAM" id="SSF53383">
    <property type="entry name" value="PLP-dependent transferases"/>
    <property type="match status" value="1"/>
</dbReference>
<dbReference type="PROSITE" id="PS00599">
    <property type="entry name" value="AA_TRANSFER_CLASS_2"/>
    <property type="match status" value="1"/>
</dbReference>
<keyword id="KW-0012">Acyltransferase</keyword>
<keyword id="KW-0093">Biotin biosynthesis</keyword>
<keyword id="KW-0663">Pyridoxal phosphate</keyword>
<keyword id="KW-1185">Reference proteome</keyword>
<keyword id="KW-0808">Transferase</keyword>
<evidence type="ECO:0000250" key="1"/>
<evidence type="ECO:0000269" key="2">
    <source>
    </source>
</evidence>
<evidence type="ECO:0000269" key="3">
    <source>
    </source>
</evidence>
<evidence type="ECO:0000269" key="4">
    <source>
    </source>
</evidence>
<evidence type="ECO:0000305" key="5"/>